<organismHost>
    <name type="scientific">Aves</name>
    <dbReference type="NCBI Taxonomy" id="8782"/>
</organismHost>
<organismHost>
    <name type="scientific">Felis catus</name>
    <name type="common">Cat</name>
    <name type="synonym">Felis silvestris catus</name>
    <dbReference type="NCBI Taxonomy" id="9685"/>
</organismHost>
<organismHost>
    <name type="scientific">Homo sapiens</name>
    <name type="common">Human</name>
    <dbReference type="NCBI Taxonomy" id="9606"/>
</organismHost>
<organismHost>
    <name type="scientific">Panthera pardus</name>
    <name type="common">Leopard</name>
    <name type="synonym">Felis pardus</name>
    <dbReference type="NCBI Taxonomy" id="9691"/>
</organismHost>
<organismHost>
    <name type="scientific">Panthera tigris</name>
    <name type="common">Tiger</name>
    <dbReference type="NCBI Taxonomy" id="9694"/>
</organismHost>
<organismHost>
    <name type="scientific">Sus scrofa</name>
    <name type="common">Pig</name>
    <dbReference type="NCBI Taxonomy" id="9823"/>
</organismHost>
<dbReference type="EMBL" id="AY651568">
    <property type="protein sequence ID" value="AAT73424.1"/>
    <property type="molecule type" value="Genomic_RNA"/>
</dbReference>
<dbReference type="SMR" id="Q6DP63"/>
<dbReference type="GO" id="GO:0042025">
    <property type="term" value="C:host cell nucleus"/>
    <property type="evidence" value="ECO:0007669"/>
    <property type="project" value="UniProtKB-SubCell"/>
</dbReference>
<dbReference type="GO" id="GO:0044423">
    <property type="term" value="C:virion component"/>
    <property type="evidence" value="ECO:0007669"/>
    <property type="project" value="UniProtKB-UniRule"/>
</dbReference>
<dbReference type="GO" id="GO:0039675">
    <property type="term" value="P:exit of virus from host cell nucleus through nuclear pore"/>
    <property type="evidence" value="ECO:0007669"/>
    <property type="project" value="UniProtKB-UniRule"/>
</dbReference>
<dbReference type="Gene3D" id="1.10.287.230">
    <property type="match status" value="1"/>
</dbReference>
<dbReference type="Gene3D" id="1.10.287.10">
    <property type="entry name" value="S15/NS1, RNA-binding"/>
    <property type="match status" value="1"/>
</dbReference>
<dbReference type="HAMAP" id="MF_04067">
    <property type="entry name" value="INFV_NEP"/>
    <property type="match status" value="1"/>
</dbReference>
<dbReference type="InterPro" id="IPR000968">
    <property type="entry name" value="Flu_NS2"/>
</dbReference>
<dbReference type="Pfam" id="PF00601">
    <property type="entry name" value="Flu_NS2"/>
    <property type="match status" value="1"/>
</dbReference>
<dbReference type="SUPFAM" id="SSF101156">
    <property type="entry name" value="Nonstructural protein ns2, Nep, M1-binding domain"/>
    <property type="match status" value="1"/>
</dbReference>
<reference key="1">
    <citation type="journal article" date="2004" name="Nature">
        <title>Genesis of a highly pathogenic and potentially pandemic H5N1 influenza virus in eastern Asia.</title>
        <authorList>
            <person name="Li K.S."/>
            <person name="Guan Y."/>
            <person name="Wang J."/>
            <person name="Smith G.J.D."/>
            <person name="Xu K.M."/>
            <person name="Duan L."/>
            <person name="Rahardjo A.P."/>
            <person name="Puthavathana P."/>
            <person name="Buranathai C."/>
            <person name="Nguyen T.D."/>
            <person name="Estoepangestie A.T.S."/>
            <person name="Chaisingh A."/>
            <person name="Auewarakul P."/>
            <person name="Long H.T."/>
            <person name="Hanh N.T.H."/>
            <person name="Webby R.J."/>
            <person name="Poon L.L.M."/>
            <person name="Chen H."/>
            <person name="Shortridge K.F."/>
            <person name="Yuen K.Y."/>
            <person name="Webster R.G."/>
            <person name="Peiris J.S.M."/>
        </authorList>
    </citation>
    <scope>NUCLEOTIDE SEQUENCE [GENOMIC RNA]</scope>
</reference>
<accession>Q6DP63</accession>
<gene>
    <name evidence="1" type="primary">NS</name>
</gene>
<protein>
    <recommendedName>
        <fullName evidence="1">Nuclear export protein</fullName>
        <shortName evidence="1">NEP</shortName>
    </recommendedName>
    <alternativeName>
        <fullName evidence="1">Non-structural protein 2</fullName>
        <shortName evidence="1">NS2</shortName>
    </alternativeName>
</protein>
<sequence length="121" mass="14383">MDSNTVSSFQDILMRMSKMQLASSSEDLNGMITQFESLKLYRDSLGEAVMRMGDFHSLQIRNGKWREQLSQKFEEIRWLIEEVRHRLKITENSFEQITFMQALQLLLEVEQEIRAFSFQLI</sequence>
<keyword id="KW-0025">Alternative splicing</keyword>
<keyword id="KW-1048">Host nucleus</keyword>
<keyword id="KW-0945">Host-virus interaction</keyword>
<keyword id="KW-0813">Transport</keyword>
<keyword id="KW-0946">Virion</keyword>
<feature type="chain" id="PRO_0000311737" description="Nuclear export protein">
    <location>
        <begin position="1"/>
        <end position="121"/>
    </location>
</feature>
<feature type="short sequence motif" description="Nuclear export signal" evidence="1">
    <location>
        <begin position="12"/>
        <end position="21"/>
    </location>
</feature>
<feature type="short sequence motif" description="Nuclear export signal" evidence="1">
    <location>
        <begin position="85"/>
        <end position="94"/>
    </location>
</feature>
<evidence type="ECO:0000255" key="1">
    <source>
        <dbReference type="HAMAP-Rule" id="MF_04067"/>
    </source>
</evidence>
<organism>
    <name type="scientific">Influenza A virus (strain A/Chicken/Hong Kong/YU22/2002 H5N1 genotype Z)</name>
    <dbReference type="NCBI Taxonomy" id="284177"/>
    <lineage>
        <taxon>Viruses</taxon>
        <taxon>Riboviria</taxon>
        <taxon>Orthornavirae</taxon>
        <taxon>Negarnaviricota</taxon>
        <taxon>Polyploviricotina</taxon>
        <taxon>Insthoviricetes</taxon>
        <taxon>Articulavirales</taxon>
        <taxon>Orthomyxoviridae</taxon>
        <taxon>Alphainfluenzavirus</taxon>
        <taxon>Alphainfluenzavirus influenzae</taxon>
        <taxon>Influenza A virus</taxon>
    </lineage>
</organism>
<comment type="function">
    <text evidence="1">Mediates the nuclear export of encapsidated genomic RNAs (ribonucleoproteins, RNPs). Acts as an adapter between viral RNPs complexes and the nuclear export machinery of the cell. Possesses no intrinsic RNA-binding activity, but includes a C-terminal M1-binding domain. This domain is believed to allow recognition of RNPs bound to the protein M1. Since protein M1 is not available in large quantities before late stages of infection, such an indirect recognition mechanism probably ensures that genomic RNPs are not exported from the host nucleus until sufficient quantities of viral mRNA and progeny genomic RNA have been synthesized. Furthermore, the RNPs enter the host cytoplasm only when associated with the M1 protein that is necessary to guide them to the plasma membrane. May down-regulate viral RNA synthesis when overproduced.</text>
</comment>
<comment type="subunit">
    <text evidence="1">Interacts with protein M1. May interact with host nucleoporin RAB/HRB and exportin XPO1/CRM1.</text>
</comment>
<comment type="subcellular location">
    <subcellularLocation>
        <location evidence="1">Virion</location>
    </subcellularLocation>
    <subcellularLocation>
        <location evidence="1">Host nucleus</location>
    </subcellularLocation>
</comment>
<comment type="alternative products">
    <event type="alternative splicing"/>
    <isoform>
        <id>Q6DP63-1</id>
        <name>NEP</name>
        <name>NS2</name>
        <sequence type="displayed"/>
    </isoform>
    <isoform>
        <id>Q6DP62-1</id>
        <name>NS1</name>
        <sequence type="external"/>
    </isoform>
</comment>
<comment type="miscellaneous">
    <text>Average number present in a viral particle is estimated to be 130-200 molecules.</text>
</comment>
<comment type="similarity">
    <text evidence="1">Belongs to the influenza viruses NEP family.</text>
</comment>
<proteinExistence type="inferred from homology"/>
<name>NEP_I02A6</name>